<organism>
    <name type="scientific">Vibrio vulnificus (strain CMCP6)</name>
    <dbReference type="NCBI Taxonomy" id="216895"/>
    <lineage>
        <taxon>Bacteria</taxon>
        <taxon>Pseudomonadati</taxon>
        <taxon>Pseudomonadota</taxon>
        <taxon>Gammaproteobacteria</taxon>
        <taxon>Vibrionales</taxon>
        <taxon>Vibrionaceae</taxon>
        <taxon>Vibrio</taxon>
    </lineage>
</organism>
<dbReference type="EMBL" id="AE016795">
    <property type="protein sequence ID" value="AAO09803.1"/>
    <property type="molecule type" value="Genomic_DNA"/>
</dbReference>
<dbReference type="RefSeq" id="WP_011079328.1">
    <property type="nucleotide sequence ID" value="NC_004459.3"/>
</dbReference>
<dbReference type="SMR" id="Q8DCP7"/>
<dbReference type="KEGG" id="vvu:VV1_1351"/>
<dbReference type="HOGENOM" id="CLU_171174_2_0_6"/>
<dbReference type="Proteomes" id="UP000002275">
    <property type="component" value="Chromosome 1"/>
</dbReference>
<dbReference type="GO" id="GO:0005737">
    <property type="term" value="C:cytoplasm"/>
    <property type="evidence" value="ECO:0007669"/>
    <property type="project" value="UniProtKB-SubCell"/>
</dbReference>
<dbReference type="GO" id="GO:0000917">
    <property type="term" value="P:division septum assembly"/>
    <property type="evidence" value="ECO:0007669"/>
    <property type="project" value="UniProtKB-KW"/>
</dbReference>
<dbReference type="GO" id="GO:0043093">
    <property type="term" value="P:FtsZ-dependent cytokinesis"/>
    <property type="evidence" value="ECO:0007669"/>
    <property type="project" value="UniProtKB-UniRule"/>
</dbReference>
<dbReference type="Gene3D" id="1.20.5.340">
    <property type="match status" value="1"/>
</dbReference>
<dbReference type="HAMAP" id="MF_01196">
    <property type="entry name" value="ZapB"/>
    <property type="match status" value="1"/>
</dbReference>
<dbReference type="InterPro" id="IPR009252">
    <property type="entry name" value="Cell_div_ZapB"/>
</dbReference>
<dbReference type="Pfam" id="PF06005">
    <property type="entry name" value="ZapB"/>
    <property type="match status" value="1"/>
</dbReference>
<sequence length="80" mass="9381">MSFEVLEKLEAKIQTAVDTIALLQMEVDELKEDKAKLETEANELRAQREQLEQKAQQTQQEHAQWQERIRALLGKMEDVE</sequence>
<keyword id="KW-0131">Cell cycle</keyword>
<keyword id="KW-0132">Cell division</keyword>
<keyword id="KW-0175">Coiled coil</keyword>
<keyword id="KW-0963">Cytoplasm</keyword>
<keyword id="KW-0717">Septation</keyword>
<protein>
    <recommendedName>
        <fullName evidence="1">Cell division protein ZapB</fullName>
    </recommendedName>
</protein>
<comment type="function">
    <text evidence="1">Non-essential, abundant cell division factor that is required for proper Z-ring formation. It is recruited early to the divisome by direct interaction with FtsZ, stimulating Z-ring assembly and thereby promoting cell division earlier in the cell cycle. Its recruitment to the Z-ring requires functional FtsA or ZipA.</text>
</comment>
<comment type="subunit">
    <text evidence="1">Homodimer. The ends of the coiled-coil dimer bind to each other, forming polymers. Interacts with FtsZ.</text>
</comment>
<comment type="subcellular location">
    <subcellularLocation>
        <location>Cytoplasm</location>
    </subcellularLocation>
    <text evidence="1">Localizes to the septum at mid-cell, in a FtsZ-like pattern.</text>
</comment>
<comment type="similarity">
    <text evidence="1">Belongs to the ZapB family.</text>
</comment>
<evidence type="ECO:0000255" key="1">
    <source>
        <dbReference type="HAMAP-Rule" id="MF_01196"/>
    </source>
</evidence>
<reference key="1">
    <citation type="submission" date="2002-12" db="EMBL/GenBank/DDBJ databases">
        <title>Complete genome sequence of Vibrio vulnificus CMCP6.</title>
        <authorList>
            <person name="Rhee J.H."/>
            <person name="Kim S.Y."/>
            <person name="Chung S.S."/>
            <person name="Kim J.J."/>
            <person name="Moon Y.H."/>
            <person name="Jeong H."/>
            <person name="Choy H.E."/>
        </authorList>
    </citation>
    <scope>NUCLEOTIDE SEQUENCE [LARGE SCALE GENOMIC DNA]</scope>
    <source>
        <strain>CMCP6</strain>
    </source>
</reference>
<feature type="chain" id="PRO_0000333943" description="Cell division protein ZapB">
    <location>
        <begin position="1"/>
        <end position="80"/>
    </location>
</feature>
<feature type="coiled-coil region" evidence="1">
    <location>
        <begin position="3"/>
        <end position="80"/>
    </location>
</feature>
<proteinExistence type="inferred from homology"/>
<gene>
    <name evidence="1" type="primary">zapB</name>
    <name type="ordered locus">VV1_1351</name>
</gene>
<name>ZAPB_VIBVU</name>
<accession>Q8DCP7</accession>